<name>RS12_PROM3</name>
<proteinExistence type="inferred from homology"/>
<gene>
    <name evidence="2" type="primary">rpsL</name>
    <name evidence="2" type="synonym">rps12</name>
    <name type="ordered locus">P9303_23611</name>
</gene>
<evidence type="ECO:0000250" key="1"/>
<evidence type="ECO:0000255" key="2">
    <source>
        <dbReference type="HAMAP-Rule" id="MF_00403"/>
    </source>
</evidence>
<evidence type="ECO:0000256" key="3">
    <source>
        <dbReference type="SAM" id="MobiDB-lite"/>
    </source>
</evidence>
<evidence type="ECO:0000305" key="4"/>
<feature type="chain" id="PRO_0000296015" description="Small ribosomal subunit protein uS12">
    <location>
        <begin position="1"/>
        <end position="125"/>
    </location>
</feature>
<feature type="region of interest" description="Disordered" evidence="3">
    <location>
        <begin position="104"/>
        <end position="125"/>
    </location>
</feature>
<feature type="modified residue" description="3-methylthioaspartic acid" evidence="1">
    <location>
        <position position="89"/>
    </location>
</feature>
<protein>
    <recommendedName>
        <fullName evidence="2">Small ribosomal subunit protein uS12</fullName>
    </recommendedName>
    <alternativeName>
        <fullName evidence="4">30S ribosomal protein S12</fullName>
    </alternativeName>
</protein>
<keyword id="KW-0488">Methylation</keyword>
<keyword id="KW-0687">Ribonucleoprotein</keyword>
<keyword id="KW-0689">Ribosomal protein</keyword>
<keyword id="KW-0694">RNA-binding</keyword>
<keyword id="KW-0699">rRNA-binding</keyword>
<keyword id="KW-0820">tRNA-binding</keyword>
<reference key="1">
    <citation type="journal article" date="2007" name="PLoS Genet.">
        <title>Patterns and implications of gene gain and loss in the evolution of Prochlorococcus.</title>
        <authorList>
            <person name="Kettler G.C."/>
            <person name="Martiny A.C."/>
            <person name="Huang K."/>
            <person name="Zucker J."/>
            <person name="Coleman M.L."/>
            <person name="Rodrigue S."/>
            <person name="Chen F."/>
            <person name="Lapidus A."/>
            <person name="Ferriera S."/>
            <person name="Johnson J."/>
            <person name="Steglich C."/>
            <person name="Church G.M."/>
            <person name="Richardson P."/>
            <person name="Chisholm S.W."/>
        </authorList>
    </citation>
    <scope>NUCLEOTIDE SEQUENCE [LARGE SCALE GENOMIC DNA]</scope>
    <source>
        <strain>MIT 9303</strain>
    </source>
</reference>
<organism>
    <name type="scientific">Prochlorococcus marinus (strain MIT 9303)</name>
    <dbReference type="NCBI Taxonomy" id="59922"/>
    <lineage>
        <taxon>Bacteria</taxon>
        <taxon>Bacillati</taxon>
        <taxon>Cyanobacteriota</taxon>
        <taxon>Cyanophyceae</taxon>
        <taxon>Synechococcales</taxon>
        <taxon>Prochlorococcaceae</taxon>
        <taxon>Prochlorococcus</taxon>
    </lineage>
</organism>
<sequence length="125" mass="13975">MPTIQQLIRTERQHLTRKTKSPALRACPERRGVCTRVYTSTPKKPNSALRKVARVRLTSGFEVTAYIPGIGHNLQEHSVVLIRGGRVKDLPGVRYHIIRGTLDTAGVKDRSQSRSKYGAKASKQD</sequence>
<comment type="function">
    <text evidence="2">With S4 and S5 plays an important role in translational accuracy.</text>
</comment>
<comment type="function">
    <text evidence="2">Interacts with and stabilizes bases of the 16S rRNA that are involved in tRNA selection in the A site and with the mRNA backbone. Located at the interface of the 30S and 50S subunits, it traverses the body of the 30S subunit contacting proteins on the other side and probably holding the rRNA structure together. The combined cluster of proteins S8, S12 and S17 appears to hold together the shoulder and platform of the 30S subunit.</text>
</comment>
<comment type="subunit">
    <text evidence="2">Part of the 30S ribosomal subunit. Contacts proteins S8 and S17. May interact with IF1 in the 30S initiation complex.</text>
</comment>
<comment type="similarity">
    <text evidence="2">Belongs to the universal ribosomal protein uS12 family.</text>
</comment>
<dbReference type="EMBL" id="CP000554">
    <property type="protein sequence ID" value="ABM79094.1"/>
    <property type="molecule type" value="Genomic_DNA"/>
</dbReference>
<dbReference type="RefSeq" id="WP_011131146.1">
    <property type="nucleotide sequence ID" value="NC_008820.1"/>
</dbReference>
<dbReference type="SMR" id="A2CC84"/>
<dbReference type="STRING" id="59922.P9303_23611"/>
<dbReference type="KEGG" id="pmf:P9303_23611"/>
<dbReference type="HOGENOM" id="CLU_104295_1_2_3"/>
<dbReference type="BioCyc" id="PMAR59922:G1G80-2075-MONOMER"/>
<dbReference type="Proteomes" id="UP000002274">
    <property type="component" value="Chromosome"/>
</dbReference>
<dbReference type="GO" id="GO:0015935">
    <property type="term" value="C:small ribosomal subunit"/>
    <property type="evidence" value="ECO:0007669"/>
    <property type="project" value="InterPro"/>
</dbReference>
<dbReference type="GO" id="GO:0019843">
    <property type="term" value="F:rRNA binding"/>
    <property type="evidence" value="ECO:0007669"/>
    <property type="project" value="UniProtKB-UniRule"/>
</dbReference>
<dbReference type="GO" id="GO:0003735">
    <property type="term" value="F:structural constituent of ribosome"/>
    <property type="evidence" value="ECO:0007669"/>
    <property type="project" value="InterPro"/>
</dbReference>
<dbReference type="GO" id="GO:0000049">
    <property type="term" value="F:tRNA binding"/>
    <property type="evidence" value="ECO:0007669"/>
    <property type="project" value="UniProtKB-UniRule"/>
</dbReference>
<dbReference type="GO" id="GO:0006412">
    <property type="term" value="P:translation"/>
    <property type="evidence" value="ECO:0007669"/>
    <property type="project" value="UniProtKB-UniRule"/>
</dbReference>
<dbReference type="CDD" id="cd03368">
    <property type="entry name" value="Ribosomal_S12"/>
    <property type="match status" value="1"/>
</dbReference>
<dbReference type="FunFam" id="2.40.50.140:FF:000001">
    <property type="entry name" value="30S ribosomal protein S12"/>
    <property type="match status" value="1"/>
</dbReference>
<dbReference type="Gene3D" id="2.40.50.140">
    <property type="entry name" value="Nucleic acid-binding proteins"/>
    <property type="match status" value="1"/>
</dbReference>
<dbReference type="HAMAP" id="MF_00403_B">
    <property type="entry name" value="Ribosomal_uS12_B"/>
    <property type="match status" value="1"/>
</dbReference>
<dbReference type="InterPro" id="IPR012340">
    <property type="entry name" value="NA-bd_OB-fold"/>
</dbReference>
<dbReference type="InterPro" id="IPR006032">
    <property type="entry name" value="Ribosomal_uS12"/>
</dbReference>
<dbReference type="InterPro" id="IPR005679">
    <property type="entry name" value="Ribosomal_uS12_bac"/>
</dbReference>
<dbReference type="NCBIfam" id="TIGR00981">
    <property type="entry name" value="rpsL_bact"/>
    <property type="match status" value="1"/>
</dbReference>
<dbReference type="PANTHER" id="PTHR11652">
    <property type="entry name" value="30S RIBOSOMAL PROTEIN S12 FAMILY MEMBER"/>
    <property type="match status" value="1"/>
</dbReference>
<dbReference type="Pfam" id="PF00164">
    <property type="entry name" value="Ribosom_S12_S23"/>
    <property type="match status" value="1"/>
</dbReference>
<dbReference type="PIRSF" id="PIRSF002133">
    <property type="entry name" value="Ribosomal_S12/S23"/>
    <property type="match status" value="1"/>
</dbReference>
<dbReference type="PRINTS" id="PR01034">
    <property type="entry name" value="RIBOSOMALS12"/>
</dbReference>
<dbReference type="SUPFAM" id="SSF50249">
    <property type="entry name" value="Nucleic acid-binding proteins"/>
    <property type="match status" value="1"/>
</dbReference>
<dbReference type="PROSITE" id="PS00055">
    <property type="entry name" value="RIBOSOMAL_S12"/>
    <property type="match status" value="1"/>
</dbReference>
<accession>A2CC84</accession>